<evidence type="ECO:0000250" key="1"/>
<evidence type="ECO:0000250" key="2">
    <source>
        <dbReference type="UniProtKB" id="A1XRN2"/>
    </source>
</evidence>
<evidence type="ECO:0000250" key="3">
    <source>
        <dbReference type="UniProtKB" id="P21755"/>
    </source>
</evidence>
<evidence type="ECO:0000255" key="4"/>
<evidence type="ECO:0000255" key="5">
    <source>
        <dbReference type="PROSITE-ProRule" id="PRU00040"/>
    </source>
</evidence>
<evidence type="ECO:0000305" key="6"/>
<evidence type="ECO:0000305" key="7">
    <source ref="1"/>
</evidence>
<feature type="signal peptide" evidence="1">
    <location>
        <begin position="1"/>
        <end position="19"/>
    </location>
</feature>
<feature type="chain" id="PRO_0000356346" description="Phospholipase A2 inhibitor A1">
    <location>
        <begin position="20"/>
        <end position="166"/>
    </location>
</feature>
<feature type="domain" description="C-type lectin" evidence="5">
    <location>
        <begin position="46"/>
        <end position="161"/>
    </location>
</feature>
<feature type="glycosylation site" description="N-linked (GlcNAc...) asparagine" evidence="4">
    <location>
        <position position="122"/>
    </location>
</feature>
<feature type="disulfide bond" evidence="3">
    <location>
        <begin position="83"/>
        <end position="160"/>
    </location>
</feature>
<feature type="disulfide bond" evidence="3">
    <location>
        <begin position="138"/>
        <end position="152"/>
    </location>
</feature>
<name>PLIA1_BOTNU</name>
<dbReference type="EMBL" id="EU421926">
    <property type="protein sequence ID" value="ABZ82343.1"/>
    <property type="molecule type" value="mRNA"/>
</dbReference>
<dbReference type="SMR" id="B1A4Q2"/>
<dbReference type="GO" id="GO:0005576">
    <property type="term" value="C:extracellular region"/>
    <property type="evidence" value="ECO:0007669"/>
    <property type="project" value="UniProtKB-SubCell"/>
</dbReference>
<dbReference type="GO" id="GO:0030246">
    <property type="term" value="F:carbohydrate binding"/>
    <property type="evidence" value="ECO:0007669"/>
    <property type="project" value="UniProtKB-KW"/>
</dbReference>
<dbReference type="GO" id="GO:0019834">
    <property type="term" value="F:phospholipase A2 inhibitor activity"/>
    <property type="evidence" value="ECO:0007669"/>
    <property type="project" value="UniProtKB-KW"/>
</dbReference>
<dbReference type="Gene3D" id="3.10.100.10">
    <property type="entry name" value="Mannose-Binding Protein A, subunit A"/>
    <property type="match status" value="1"/>
</dbReference>
<dbReference type="InterPro" id="IPR001304">
    <property type="entry name" value="C-type_lectin-like"/>
</dbReference>
<dbReference type="InterPro" id="IPR016186">
    <property type="entry name" value="C-type_lectin-like/link_sf"/>
</dbReference>
<dbReference type="InterPro" id="IPR018378">
    <property type="entry name" value="C-type_lectin_CS"/>
</dbReference>
<dbReference type="InterPro" id="IPR016187">
    <property type="entry name" value="CTDL_fold"/>
</dbReference>
<dbReference type="Pfam" id="PF00059">
    <property type="entry name" value="Lectin_C"/>
    <property type="match status" value="1"/>
</dbReference>
<dbReference type="SUPFAM" id="SSF56436">
    <property type="entry name" value="C-type lectin-like"/>
    <property type="match status" value="1"/>
</dbReference>
<dbReference type="PROSITE" id="PS00615">
    <property type="entry name" value="C_TYPE_LECTIN_1"/>
    <property type="match status" value="1"/>
</dbReference>
<dbReference type="PROSITE" id="PS50041">
    <property type="entry name" value="C_TYPE_LECTIN_2"/>
    <property type="match status" value="1"/>
</dbReference>
<sequence length="166" mass="18336">MRLILLSGLLLLGIFLANGDEVDREGKVVNSLIDALMHLQREFAKLKGSFLIVHKARSFGSGSERMYVTNKEIKNFEALRQICEQADGHIPSPQLENQNKAFANVLERHGKEAYLVVGDSANFTNWAAGEPNKAAGACVKADTHGSWHSASCDDNLLVVCEFYFIL</sequence>
<organism>
    <name type="scientific">Bothrops neuwiedi</name>
    <name type="common">Neuwied's lancehead</name>
    <dbReference type="NCBI Taxonomy" id="95648"/>
    <lineage>
        <taxon>Eukaryota</taxon>
        <taxon>Metazoa</taxon>
        <taxon>Chordata</taxon>
        <taxon>Craniata</taxon>
        <taxon>Vertebrata</taxon>
        <taxon>Euteleostomi</taxon>
        <taxon>Lepidosauria</taxon>
        <taxon>Squamata</taxon>
        <taxon>Bifurcata</taxon>
        <taxon>Unidentata</taxon>
        <taxon>Episquamata</taxon>
        <taxon>Toxicofera</taxon>
        <taxon>Serpentes</taxon>
        <taxon>Colubroidea</taxon>
        <taxon>Viperidae</taxon>
        <taxon>Crotalinae</taxon>
        <taxon>Bothrops</taxon>
    </lineage>
</organism>
<accession>B1A4Q2</accession>
<protein>
    <recommendedName>
        <fullName>Phospholipase A2 inhibitor A1</fullName>
        <shortName>alpha-PLI</shortName>
    </recommendedName>
</protein>
<proteinExistence type="evidence at transcript level"/>
<comment type="function">
    <text evidence="1">This phospholipase A2 inhibitor binds directly phospholipase A2 in the presence or absence of calcium.</text>
</comment>
<comment type="subunit">
    <text evidence="2">Homotrimer; non-covalently linked.</text>
</comment>
<comment type="subcellular location">
    <subcellularLocation>
        <location evidence="7">Secreted</location>
    </subcellularLocation>
    <text evidence="6">Secreted in plasma.</text>
</comment>
<comment type="tissue specificity">
    <text evidence="7">Expressed by the liver.</text>
</comment>
<comment type="similarity">
    <text evidence="6">Belongs to the alpha-type phospholipase A2 inhibitor family.</text>
</comment>
<keyword id="KW-0106">Calcium</keyword>
<keyword id="KW-1015">Disulfide bond</keyword>
<keyword id="KW-0325">Glycoprotein</keyword>
<keyword id="KW-0430">Lectin</keyword>
<keyword id="KW-0593">Phospholipase A2 inhibitor</keyword>
<keyword id="KW-0964">Secreted</keyword>
<keyword id="KW-0732">Signal</keyword>
<reference key="1">
    <citation type="submission" date="2008-01" db="EMBL/GenBank/DDBJ databases">
        <title>A profile of the phospholipase A2 inhibitors of the alpha class prospected in Brazilian Crotalidae snakes: structural and phylogenetic analysis.</title>
        <authorList>
            <person name="Estevao-Costa M.I."/>
            <person name="Costa M.A.F."/>
            <person name="Mudado M.A."/>
            <person name="Franco G.R."/>
            <person name="Fortes-Dias C.L."/>
        </authorList>
    </citation>
    <scope>NUCLEOTIDE SEQUENCE [MRNA]</scope>
    <source>
        <tissue>Liver</tissue>
    </source>
</reference>